<keyword id="KW-0067">ATP-binding</keyword>
<keyword id="KW-0418">Kinase</keyword>
<keyword id="KW-0547">Nucleotide-binding</keyword>
<keyword id="KW-0597">Phosphoprotein</keyword>
<keyword id="KW-1185">Reference proteome</keyword>
<keyword id="KW-0723">Serine/threonine-protein kinase</keyword>
<keyword id="KW-0808">Transferase</keyword>
<gene>
    <name type="primary">ASK6</name>
    <name type="synonym">SK2-2</name>
    <name evidence="8" type="synonym">SK23</name>
    <name evidence="10" type="ordered locus">At2g30980</name>
    <name evidence="11" type="ORF">F7F1.19</name>
</gene>
<proteinExistence type="evidence at protein level"/>
<dbReference type="EC" id="2.7.11.1"/>
<dbReference type="EMBL" id="X94938">
    <property type="protein sequence ID" value="CAA64408.1"/>
    <property type="molecule type" value="mRNA"/>
</dbReference>
<dbReference type="EMBL" id="Y09300">
    <property type="protein sequence ID" value="CAA70483.1"/>
    <property type="molecule type" value="Genomic_DNA"/>
</dbReference>
<dbReference type="EMBL" id="AC004669">
    <property type="protein sequence ID" value="AAC20732.1"/>
    <property type="molecule type" value="Genomic_DNA"/>
</dbReference>
<dbReference type="EMBL" id="CP002685">
    <property type="protein sequence ID" value="AEC08470.1"/>
    <property type="molecule type" value="Genomic_DNA"/>
</dbReference>
<dbReference type="EMBL" id="AY064020">
    <property type="protein sequence ID" value="AAL36376.1"/>
    <property type="molecule type" value="mRNA"/>
</dbReference>
<dbReference type="EMBL" id="AY094423">
    <property type="protein sequence ID" value="AAM19796.1"/>
    <property type="molecule type" value="mRNA"/>
</dbReference>
<dbReference type="EMBL" id="AY096698">
    <property type="protein sequence ID" value="AAM20332.1"/>
    <property type="molecule type" value="mRNA"/>
</dbReference>
<dbReference type="EMBL" id="AY087542">
    <property type="protein sequence ID" value="AAM65084.1"/>
    <property type="molecule type" value="mRNA"/>
</dbReference>
<dbReference type="PIR" id="A84715">
    <property type="entry name" value="A84715"/>
</dbReference>
<dbReference type="PIR" id="S71266">
    <property type="entry name" value="S71266"/>
</dbReference>
<dbReference type="SMR" id="Q39010"/>
<dbReference type="BioGRID" id="2998">
    <property type="interactions" value="16"/>
</dbReference>
<dbReference type="FunCoup" id="Q39010">
    <property type="interactions" value="3541"/>
</dbReference>
<dbReference type="IntAct" id="Q39010">
    <property type="interactions" value="11"/>
</dbReference>
<dbReference type="STRING" id="3702.Q39010"/>
<dbReference type="iPTMnet" id="Q39010"/>
<dbReference type="PaxDb" id="3702-AT2G30980.1"/>
<dbReference type="ProteomicsDB" id="237067"/>
<dbReference type="EnsemblPlants" id="AT2G30980.1">
    <property type="protein sequence ID" value="AT2G30980.1"/>
    <property type="gene ID" value="AT2G30980"/>
</dbReference>
<dbReference type="GeneID" id="817649"/>
<dbReference type="Gramene" id="AT2G30980.1">
    <property type="protein sequence ID" value="AT2G30980.1"/>
    <property type="gene ID" value="AT2G30980"/>
</dbReference>
<dbReference type="KEGG" id="ath:AT2G30980"/>
<dbReference type="Araport" id="AT2G30980"/>
<dbReference type="TAIR" id="AT2G30980">
    <property type="gene designation" value="SKDZETA"/>
</dbReference>
<dbReference type="eggNOG" id="KOG0658">
    <property type="taxonomic scope" value="Eukaryota"/>
</dbReference>
<dbReference type="HOGENOM" id="CLU_000288_181_20_1"/>
<dbReference type="InParanoid" id="Q39010"/>
<dbReference type="OMA" id="CAHASYD"/>
<dbReference type="OrthoDB" id="272141at2759"/>
<dbReference type="PhylomeDB" id="Q39010"/>
<dbReference type="BRENDA" id="2.7.11.26">
    <property type="organism ID" value="399"/>
</dbReference>
<dbReference type="PRO" id="PR:Q39010"/>
<dbReference type="Proteomes" id="UP000006548">
    <property type="component" value="Chromosome 2"/>
</dbReference>
<dbReference type="ExpressionAtlas" id="Q39010">
    <property type="expression patterns" value="baseline and differential"/>
</dbReference>
<dbReference type="GO" id="GO:0005524">
    <property type="term" value="F:ATP binding"/>
    <property type="evidence" value="ECO:0007669"/>
    <property type="project" value="UniProtKB-KW"/>
</dbReference>
<dbReference type="GO" id="GO:0106310">
    <property type="term" value="F:protein serine kinase activity"/>
    <property type="evidence" value="ECO:0007669"/>
    <property type="project" value="RHEA"/>
</dbReference>
<dbReference type="GO" id="GO:0004674">
    <property type="term" value="F:protein serine/threonine kinase activity"/>
    <property type="evidence" value="ECO:0007669"/>
    <property type="project" value="UniProtKB-KW"/>
</dbReference>
<dbReference type="GO" id="GO:0009742">
    <property type="term" value="P:brassinosteroid mediated signaling pathway"/>
    <property type="evidence" value="ECO:0000353"/>
    <property type="project" value="TAIR"/>
</dbReference>
<dbReference type="GO" id="GO:0006468">
    <property type="term" value="P:protein phosphorylation"/>
    <property type="evidence" value="ECO:0000314"/>
    <property type="project" value="TAIR"/>
</dbReference>
<dbReference type="GO" id="GO:0032880">
    <property type="term" value="P:regulation of protein localization"/>
    <property type="evidence" value="ECO:0000314"/>
    <property type="project" value="TAIR"/>
</dbReference>
<dbReference type="CDD" id="cd14137">
    <property type="entry name" value="STKc_GSK3"/>
    <property type="match status" value="1"/>
</dbReference>
<dbReference type="FunFam" id="3.30.200.20:FF:000009">
    <property type="entry name" value="Glycogen synthase kinase-3 beta"/>
    <property type="match status" value="1"/>
</dbReference>
<dbReference type="FunFam" id="1.10.510.10:FF:000082">
    <property type="entry name" value="Shaggy-related protein kinase kappa"/>
    <property type="match status" value="1"/>
</dbReference>
<dbReference type="Gene3D" id="3.30.200.20">
    <property type="entry name" value="Phosphorylase Kinase, domain 1"/>
    <property type="match status" value="1"/>
</dbReference>
<dbReference type="Gene3D" id="1.10.510.10">
    <property type="entry name" value="Transferase(Phosphotransferase) domain 1"/>
    <property type="match status" value="1"/>
</dbReference>
<dbReference type="InterPro" id="IPR050591">
    <property type="entry name" value="GSK-3"/>
</dbReference>
<dbReference type="InterPro" id="IPR011009">
    <property type="entry name" value="Kinase-like_dom_sf"/>
</dbReference>
<dbReference type="InterPro" id="IPR000719">
    <property type="entry name" value="Prot_kinase_dom"/>
</dbReference>
<dbReference type="InterPro" id="IPR017441">
    <property type="entry name" value="Protein_kinase_ATP_BS"/>
</dbReference>
<dbReference type="InterPro" id="IPR008271">
    <property type="entry name" value="Ser/Thr_kinase_AS"/>
</dbReference>
<dbReference type="InterPro" id="IPR039192">
    <property type="entry name" value="STKc_GSK3"/>
</dbReference>
<dbReference type="PANTHER" id="PTHR24057">
    <property type="entry name" value="GLYCOGEN SYNTHASE KINASE-3 ALPHA"/>
    <property type="match status" value="1"/>
</dbReference>
<dbReference type="PANTHER" id="PTHR24057:SF5">
    <property type="entry name" value="SHAGGY-RELATED PROTEIN KINASE IOTA-RELATED"/>
    <property type="match status" value="1"/>
</dbReference>
<dbReference type="Pfam" id="PF00069">
    <property type="entry name" value="Pkinase"/>
    <property type="match status" value="1"/>
</dbReference>
<dbReference type="SMART" id="SM00220">
    <property type="entry name" value="S_TKc"/>
    <property type="match status" value="1"/>
</dbReference>
<dbReference type="SUPFAM" id="SSF56112">
    <property type="entry name" value="Protein kinase-like (PK-like)"/>
    <property type="match status" value="1"/>
</dbReference>
<dbReference type="PROSITE" id="PS00107">
    <property type="entry name" value="PROTEIN_KINASE_ATP"/>
    <property type="match status" value="1"/>
</dbReference>
<dbReference type="PROSITE" id="PS50011">
    <property type="entry name" value="PROTEIN_KINASE_DOM"/>
    <property type="match status" value="1"/>
</dbReference>
<dbReference type="PROSITE" id="PS00108">
    <property type="entry name" value="PROTEIN_KINASE_ST"/>
    <property type="match status" value="1"/>
</dbReference>
<accession>Q39010</accession>
<accession>O80862</accession>
<accession>Q541C5</accession>
<accession>Q8LAX6</accession>
<evidence type="ECO:0000250" key="1"/>
<evidence type="ECO:0000250" key="2">
    <source>
        <dbReference type="UniProtKB" id="Q39011"/>
    </source>
</evidence>
<evidence type="ECO:0000255" key="3"/>
<evidence type="ECO:0000255" key="4">
    <source>
        <dbReference type="PROSITE-ProRule" id="PRU00159"/>
    </source>
</evidence>
<evidence type="ECO:0000255" key="5">
    <source>
        <dbReference type="PROSITE-ProRule" id="PRU10027"/>
    </source>
</evidence>
<evidence type="ECO:0000256" key="6">
    <source>
        <dbReference type="SAM" id="MobiDB-lite"/>
    </source>
</evidence>
<evidence type="ECO:0000269" key="7">
    <source>
    </source>
</evidence>
<evidence type="ECO:0000303" key="8">
    <source>
    </source>
</evidence>
<evidence type="ECO:0000305" key="9"/>
<evidence type="ECO:0000312" key="10">
    <source>
        <dbReference type="Araport" id="AT2G30980"/>
    </source>
</evidence>
<evidence type="ECO:0000312" key="11">
    <source>
        <dbReference type="EMBL" id="AAC20732.1"/>
    </source>
</evidence>
<sequence>MTSIPLGPPQPPSLAPQPPHLHGGDSLKRRPDIDNDKEMSAAVIEGNDAVTGHIISTTIGGKNGEPKQTISYMAERVVGTGSFGIVFQAKCLETGESVAIKKVLQDRRYKNRELQLMRLMDHPNVVSLKHCFFSTTTRDELFLNLVMEYVPETLYRVLKHYTSSNQRMPIFYVKLYTYQIFRGLAYIHTAPGVCHRDVKPQNLLVDPLTHQCKLCDFGSAKVLVKGEANISYICSRYYRAPELIFGATEYTSSIDIWSAGCVLAELLLGQPLFPGENSVDQLVEIIKVLGTPTREEIRCMNPNYTDFRFPQIKAHPWHKVFHKRMPPEAIDLASRLLQYSPSLRCTALEACAHPFFNELREPNARLPNGRPLPPLFNFKQELSGASPELINRLIPEHVRRQMNGGFPFQAGP</sequence>
<protein>
    <recommendedName>
        <fullName>Shaggy-related protein kinase zeta</fullName>
        <ecNumber>2.7.11.1</ecNumber>
    </recommendedName>
    <alternativeName>
        <fullName>ASK-zeta</fullName>
    </alternativeName>
    <alternativeName>
        <fullName>Shaggy-related protein kinase 2-2</fullName>
        <shortName>AtSK2-2</shortName>
    </alternativeName>
    <alternativeName>
        <fullName evidence="8">Shaggy-related protein kinase 23</fullName>
        <shortName evidence="8">AtSK23</shortName>
    </alternativeName>
</protein>
<name>KSG6_ARATH</name>
<feature type="chain" id="PRO_0000086221" description="Shaggy-related protein kinase zeta">
    <location>
        <begin position="1"/>
        <end position="412"/>
    </location>
</feature>
<feature type="domain" description="Protein kinase" evidence="4">
    <location>
        <begin position="72"/>
        <end position="356"/>
    </location>
</feature>
<feature type="region of interest" description="Disordered" evidence="6">
    <location>
        <begin position="1"/>
        <end position="33"/>
    </location>
</feature>
<feature type="compositionally biased region" description="Pro residues" evidence="6">
    <location>
        <begin position="1"/>
        <end position="19"/>
    </location>
</feature>
<feature type="compositionally biased region" description="Basic and acidic residues" evidence="6">
    <location>
        <begin position="22"/>
        <end position="33"/>
    </location>
</feature>
<feature type="active site" description="Proton acceptor" evidence="4 5">
    <location>
        <position position="197"/>
    </location>
</feature>
<feature type="binding site" evidence="4">
    <location>
        <begin position="78"/>
        <end position="86"/>
    </location>
    <ligand>
        <name>ATP</name>
        <dbReference type="ChEBI" id="CHEBI:30616"/>
    </ligand>
</feature>
<feature type="binding site" evidence="4">
    <location>
        <position position="101"/>
    </location>
    <ligand>
        <name>ATP</name>
        <dbReference type="ChEBI" id="CHEBI:30616"/>
    </ligand>
</feature>
<feature type="modified residue" description="Phosphoserine" evidence="3">
    <location>
        <position position="26"/>
    </location>
</feature>
<feature type="modified residue" description="Phosphoserine" evidence="3">
    <location>
        <position position="127"/>
    </location>
</feature>
<feature type="modified residue" description="Phosphothreonine" evidence="3">
    <location>
        <position position="136"/>
    </location>
</feature>
<feature type="modified residue" description="Phosphothreonine" evidence="3">
    <location>
        <position position="137"/>
    </location>
</feature>
<feature type="modified residue" description="Phosphoserine" evidence="3">
    <location>
        <position position="219"/>
    </location>
</feature>
<feature type="modified residue" description="Phosphotyrosine" evidence="2">
    <location>
        <position position="232"/>
    </location>
</feature>
<feature type="modified residue" description="Phosphoserine" evidence="3">
    <location>
        <position position="252"/>
    </location>
</feature>
<feature type="modified residue" description="Phosphothreonine" evidence="3">
    <location>
        <position position="293"/>
    </location>
</feature>
<feature type="modified residue" description="Phosphoserine" evidence="3">
    <location>
        <position position="342"/>
    </location>
</feature>
<feature type="modified residue" description="Phosphothreonine" evidence="3">
    <location>
        <position position="346"/>
    </location>
</feature>
<feature type="sequence conflict" description="In Ref. 1; CAA64408 and 2; CAA70483." evidence="9" ref="1 2">
    <original>V</original>
    <variation>I</variation>
    <location>
        <position position="198"/>
    </location>
</feature>
<feature type="sequence conflict" description="In Ref. 1; CAA64408 and 2; CAA70483." evidence="9" ref="1 2">
    <original>L</original>
    <variation>H</variation>
    <location>
        <position position="208"/>
    </location>
</feature>
<feature type="sequence conflict" description="In Ref. 1; CAA64408 and 2; CAA70483." evidence="9" ref="1 2">
    <original>A</original>
    <variation>P</variation>
    <location>
        <position position="228"/>
    </location>
</feature>
<feature type="sequence conflict" description="In Ref. 6; AAM65084." evidence="9" ref="6">
    <original>A</original>
    <variation>S</variation>
    <location>
        <position position="240"/>
    </location>
</feature>
<feature type="sequence conflict" description="In Ref. 6; AAM65084." evidence="9" ref="6">
    <original>Q</original>
    <variation>R</variation>
    <location>
        <position position="281"/>
    </location>
</feature>
<organism>
    <name type="scientific">Arabidopsis thaliana</name>
    <name type="common">Mouse-ear cress</name>
    <dbReference type="NCBI Taxonomy" id="3702"/>
    <lineage>
        <taxon>Eukaryota</taxon>
        <taxon>Viridiplantae</taxon>
        <taxon>Streptophyta</taxon>
        <taxon>Embryophyta</taxon>
        <taxon>Tracheophyta</taxon>
        <taxon>Spermatophyta</taxon>
        <taxon>Magnoliopsida</taxon>
        <taxon>eudicotyledons</taxon>
        <taxon>Gunneridae</taxon>
        <taxon>Pentapetalae</taxon>
        <taxon>rosids</taxon>
        <taxon>malvids</taxon>
        <taxon>Brassicales</taxon>
        <taxon>Brassicaceae</taxon>
        <taxon>Camelineae</taxon>
        <taxon>Arabidopsis</taxon>
    </lineage>
</organism>
<comment type="function">
    <text evidence="1">May mediate extracellular signals to regulate transcription in differentiating cells.</text>
</comment>
<comment type="catalytic activity">
    <reaction>
        <text>L-seryl-[protein] + ATP = O-phospho-L-seryl-[protein] + ADP + H(+)</text>
        <dbReference type="Rhea" id="RHEA:17989"/>
        <dbReference type="Rhea" id="RHEA-COMP:9863"/>
        <dbReference type="Rhea" id="RHEA-COMP:11604"/>
        <dbReference type="ChEBI" id="CHEBI:15378"/>
        <dbReference type="ChEBI" id="CHEBI:29999"/>
        <dbReference type="ChEBI" id="CHEBI:30616"/>
        <dbReference type="ChEBI" id="CHEBI:83421"/>
        <dbReference type="ChEBI" id="CHEBI:456216"/>
        <dbReference type="EC" id="2.7.11.1"/>
    </reaction>
</comment>
<comment type="catalytic activity">
    <reaction>
        <text>L-threonyl-[protein] + ATP = O-phospho-L-threonyl-[protein] + ADP + H(+)</text>
        <dbReference type="Rhea" id="RHEA:46608"/>
        <dbReference type="Rhea" id="RHEA-COMP:11060"/>
        <dbReference type="Rhea" id="RHEA-COMP:11605"/>
        <dbReference type="ChEBI" id="CHEBI:15378"/>
        <dbReference type="ChEBI" id="CHEBI:30013"/>
        <dbReference type="ChEBI" id="CHEBI:30616"/>
        <dbReference type="ChEBI" id="CHEBI:61977"/>
        <dbReference type="ChEBI" id="CHEBI:456216"/>
        <dbReference type="EC" id="2.7.11.1"/>
    </reaction>
</comment>
<comment type="subunit">
    <text evidence="7">Binds to KIB1 (PubMed:28575660). Interacts with beet curly top virus AL4/C4 and tomato golden mosaic virus AL4/AC4.</text>
</comment>
<comment type="interaction">
    <interactant intactId="EBI-1238323">
        <id>Q39010</id>
    </interactant>
    <interactant intactId="EBI-4436537">
        <id>Q8GY45</id>
        <label>At1g35210/T32G9_25</label>
    </interactant>
    <organismsDiffer>false</organismsDiffer>
    <experiments>4</experiments>
</comment>
<comment type="interaction">
    <interactant intactId="EBI-1238323">
        <id>Q39010</id>
    </interactant>
    <interactant intactId="EBI-25514571">
        <id>O49404</id>
        <label>BEH3</label>
    </interactant>
    <organismsDiffer>false</organismsDiffer>
    <experiments>3</experiments>
</comment>
<comment type="interaction">
    <interactant intactId="EBI-1238323">
        <id>Q39010</id>
    </interactant>
    <interactant intactId="EBI-25521920">
        <id>Q9FKQ7</id>
        <label>MNA5.2</label>
    </interactant>
    <organismsDiffer>false</organismsDiffer>
    <experiments>3</experiments>
</comment>
<comment type="PTM">
    <text evidence="1">Autophosphorylated mainly on threonine and serine residues.</text>
</comment>
<comment type="similarity">
    <text evidence="9">Belongs to the protein kinase superfamily. CMGC Ser/Thr protein kinase family. GSK-3 subfamily.</text>
</comment>
<reference key="1">
    <citation type="online journal article" date="1997" name="Plant Gene Register">
        <title>Three new cDNAs related to SGG/GSK-3 (SHAGGY/glycogen synthase kinase-3) from Arabidopsis thaliana.</title>
        <authorList>
            <person name="Dornelas M.C."/>
            <person name="Schwebel-Dugue N."/>
            <person name="Thomas M."/>
            <person name="Lecharny A."/>
            <person name="Kreis M."/>
        </authorList>
        <locator>PGR97-008</locator>
    </citation>
    <scope>NUCLEOTIDE SEQUENCE [MRNA]</scope>
    <source>
        <strain>cv. Columbia</strain>
        <tissue>Leaf</tissue>
    </source>
</reference>
<reference key="2">
    <citation type="journal article" date="1998" name="Gene">
        <title>The Arabidopsis SHAGGY-related protein kinase (ASK) gene family: structure, organization and evolution.</title>
        <authorList>
            <person name="Dornelas M.C."/>
            <person name="Lejeune B."/>
            <person name="Dron M."/>
            <person name="Kreis M."/>
        </authorList>
    </citation>
    <scope>NUCLEOTIDE SEQUENCE [GENOMIC DNA]</scope>
    <source>
        <strain>cv. Columbia</strain>
        <tissue>Leaf</tissue>
    </source>
</reference>
<reference key="3">
    <citation type="journal article" date="1999" name="Nature">
        <title>Sequence and analysis of chromosome 2 of the plant Arabidopsis thaliana.</title>
        <authorList>
            <person name="Lin X."/>
            <person name="Kaul S."/>
            <person name="Rounsley S.D."/>
            <person name="Shea T.P."/>
            <person name="Benito M.-I."/>
            <person name="Town C.D."/>
            <person name="Fujii C.Y."/>
            <person name="Mason T.M."/>
            <person name="Bowman C.L."/>
            <person name="Barnstead M.E."/>
            <person name="Feldblyum T.V."/>
            <person name="Buell C.R."/>
            <person name="Ketchum K.A."/>
            <person name="Lee J.J."/>
            <person name="Ronning C.M."/>
            <person name="Koo H.L."/>
            <person name="Moffat K.S."/>
            <person name="Cronin L.A."/>
            <person name="Shen M."/>
            <person name="Pai G."/>
            <person name="Van Aken S."/>
            <person name="Umayam L."/>
            <person name="Tallon L.J."/>
            <person name="Gill J.E."/>
            <person name="Adams M.D."/>
            <person name="Carrera A.J."/>
            <person name="Creasy T.H."/>
            <person name="Goodman H.M."/>
            <person name="Somerville C.R."/>
            <person name="Copenhaver G.P."/>
            <person name="Preuss D."/>
            <person name="Nierman W.C."/>
            <person name="White O."/>
            <person name="Eisen J.A."/>
            <person name="Salzberg S.L."/>
            <person name="Fraser C.M."/>
            <person name="Venter J.C."/>
        </authorList>
    </citation>
    <scope>NUCLEOTIDE SEQUENCE [LARGE SCALE GENOMIC DNA]</scope>
    <source>
        <strain>cv. Columbia</strain>
    </source>
</reference>
<reference key="4">
    <citation type="journal article" date="2017" name="Plant J.">
        <title>Araport11: a complete reannotation of the Arabidopsis thaliana reference genome.</title>
        <authorList>
            <person name="Cheng C.Y."/>
            <person name="Krishnakumar V."/>
            <person name="Chan A.P."/>
            <person name="Thibaud-Nissen F."/>
            <person name="Schobel S."/>
            <person name="Town C.D."/>
        </authorList>
    </citation>
    <scope>GENOME REANNOTATION</scope>
    <source>
        <strain>cv. Columbia</strain>
    </source>
</reference>
<reference key="5">
    <citation type="journal article" date="2003" name="Science">
        <title>Empirical analysis of transcriptional activity in the Arabidopsis genome.</title>
        <authorList>
            <person name="Yamada K."/>
            <person name="Lim J."/>
            <person name="Dale J.M."/>
            <person name="Chen H."/>
            <person name="Shinn P."/>
            <person name="Palm C.J."/>
            <person name="Southwick A.M."/>
            <person name="Wu H.C."/>
            <person name="Kim C.J."/>
            <person name="Nguyen M."/>
            <person name="Pham P.K."/>
            <person name="Cheuk R.F."/>
            <person name="Karlin-Newmann G."/>
            <person name="Liu S.X."/>
            <person name="Lam B."/>
            <person name="Sakano H."/>
            <person name="Wu T."/>
            <person name="Yu G."/>
            <person name="Miranda M."/>
            <person name="Quach H.L."/>
            <person name="Tripp M."/>
            <person name="Chang C.H."/>
            <person name="Lee J.M."/>
            <person name="Toriumi M.J."/>
            <person name="Chan M.M."/>
            <person name="Tang C.C."/>
            <person name="Onodera C.S."/>
            <person name="Deng J.M."/>
            <person name="Akiyama K."/>
            <person name="Ansari Y."/>
            <person name="Arakawa T."/>
            <person name="Banh J."/>
            <person name="Banno F."/>
            <person name="Bowser L."/>
            <person name="Brooks S.Y."/>
            <person name="Carninci P."/>
            <person name="Chao Q."/>
            <person name="Choy N."/>
            <person name="Enju A."/>
            <person name="Goldsmith A.D."/>
            <person name="Gurjal M."/>
            <person name="Hansen N.F."/>
            <person name="Hayashizaki Y."/>
            <person name="Johnson-Hopson C."/>
            <person name="Hsuan V.W."/>
            <person name="Iida K."/>
            <person name="Karnes M."/>
            <person name="Khan S."/>
            <person name="Koesema E."/>
            <person name="Ishida J."/>
            <person name="Jiang P.X."/>
            <person name="Jones T."/>
            <person name="Kawai J."/>
            <person name="Kamiya A."/>
            <person name="Meyers C."/>
            <person name="Nakajima M."/>
            <person name="Narusaka M."/>
            <person name="Seki M."/>
            <person name="Sakurai T."/>
            <person name="Satou M."/>
            <person name="Tamse R."/>
            <person name="Vaysberg M."/>
            <person name="Wallender E.K."/>
            <person name="Wong C."/>
            <person name="Yamamura Y."/>
            <person name="Yuan S."/>
            <person name="Shinozaki K."/>
            <person name="Davis R.W."/>
            <person name="Theologis A."/>
            <person name="Ecker J.R."/>
        </authorList>
    </citation>
    <scope>NUCLEOTIDE SEQUENCE [LARGE SCALE MRNA]</scope>
    <source>
        <strain>cv. Columbia</strain>
    </source>
</reference>
<reference key="6">
    <citation type="submission" date="2002-03" db="EMBL/GenBank/DDBJ databases">
        <title>Full-length cDNA from Arabidopsis thaliana.</title>
        <authorList>
            <person name="Brover V.V."/>
            <person name="Troukhan M.E."/>
            <person name="Alexandrov N.A."/>
            <person name="Lu Y.-P."/>
            <person name="Flavell R.B."/>
            <person name="Feldmann K.A."/>
        </authorList>
    </citation>
    <scope>NUCLEOTIDE SEQUENCE [LARGE SCALE MRNA]</scope>
</reference>
<reference key="7">
    <citation type="journal article" date="2017" name="Mol. Cell">
        <title>The F-box protein KIB1 mediates brassinosteroid-induced inactivation and degradation of GSK3-like kinases in Arabidopsis.</title>
        <authorList>
            <person name="Zhu J.-Y."/>
            <person name="Li Y."/>
            <person name="Cao D.-M."/>
            <person name="Yang H."/>
            <person name="Oh E."/>
            <person name="Bi Y."/>
            <person name="Zhu S."/>
            <person name="Wang Z.-Y."/>
        </authorList>
    </citation>
    <scope>INTERACTION WITH KIB1</scope>
    <source>
        <strain>cv. Columbia</strain>
        <strain>cv. Wassilewskija</strain>
    </source>
</reference>